<accession>C0JRZ9</accession>
<sequence>MLRKGTVALINPNQIHPPIAPYALDVLTTALEASGFEAHVLDLTFHLDDWRQTLRDYFRAERPLLVGVTCRNTDTVYALEQRPFVDGYKAVIDEVRRLTAAPVVAGGVGFSTMPFALVDYFGIEYGVKGPGEKIICDLARALAEGRSADRIHIPGLLVNRGPGNVTRVAPPALDPRAAPAPSSSPSPSPAPSSSSAPVPVPLSFAAVGHHESRAWQAETELPYTRRSGEPYKVDNLRYYREGGLGSILTKNGCVYKCSFCVEPDAKGTQFARRGITAVVDEMEALTAQGIHDLHTTDSEFNLSIAHSKNLLREIVRRRDHDATSPLRDLRLWVYCQPSPFDEEFAELLAAAGCAGVNIGADHTRPEMLDGWKVTAKGTRYYDFADTERLVQLCHRNGMLTMVEALFGMPGETLETMRDCVDRMMELDATVTGFSLGLRLLPYMGLAKSLAEQCDGVRTVRGLQSNNASGPIVLKQLHQCDGPIEYERQFMFDESGDFRLVCYFSPDLPEAPGTADSPDGIWRASVDFLWDRIPKSEQYRVMLPTLSGSSENDNNYADNPFLTSLNRKGYTGAFWAHWRDREAIMSGATLPLGELAEAVR</sequence>
<name>TSRM_STRLU</name>
<gene>
    <name evidence="7" type="primary">tsrM</name>
    <name type="synonym">trsT</name>
</gene>
<protein>
    <recommendedName>
        <fullName evidence="8">Tryptophan 2-C-methyltransferase</fullName>
        <ecNumber evidence="6">2.1.1.106</ecNumber>
    </recommendedName>
</protein>
<comment type="function">
    <text evidence="4 5 6">Involved in the biosynthetic pathway of the antibiotic thiostrepton A. First, TsrM catalyzes the transfer of a methyl group from S-adenosyl methionine (SAM) to cobalamin, leading to the formation of methylcobalamin (CH3-cobalamin) and S-adenosyl-L-homocysteine (SAH). Then the methyl group is transferred to the C2 position of tryptophan (Trp) with the concerted action of the radical SAM [4Fe-4S] center, leading to the production of methyltryptophan.</text>
</comment>
<comment type="catalytic activity">
    <reaction evidence="6">
        <text>L-tryptophan + S-adenosyl-L-methionine = 2-methyl-L-tryptophan + S-adenosyl-L-homocysteine + H(+)</text>
        <dbReference type="Rhea" id="RHEA:17321"/>
        <dbReference type="ChEBI" id="CHEBI:15378"/>
        <dbReference type="ChEBI" id="CHEBI:57856"/>
        <dbReference type="ChEBI" id="CHEBI:57912"/>
        <dbReference type="ChEBI" id="CHEBI:59789"/>
        <dbReference type="ChEBI" id="CHEBI:85908"/>
        <dbReference type="EC" id="2.1.1.106"/>
    </reaction>
</comment>
<comment type="cofactor">
    <cofactor evidence="6">
        <name>[4Fe-4S] cluster</name>
        <dbReference type="ChEBI" id="CHEBI:49883"/>
    </cofactor>
    <text evidence="6">Binds 1 [4Fe-4S] cluster. The cluster is coordinated with 3 cysteines and an exchangeable S-adenosyl-L-methionine.</text>
</comment>
<comment type="cofactor">
    <cofactor evidence="6">
        <name>cob(II)alamin</name>
        <dbReference type="ChEBI" id="CHEBI:16304"/>
    </cofactor>
</comment>
<comment type="miscellaneous">
    <text evidence="6">TsrM has a totally new mechanism among methyltransferases and radical SAM enzymes. TsrM is not able to use methylcobalamin directly but instead coordinates free cobalamin. SAM serves exclusively as a methyl donor and not as a radical source, and the methyl group of SAM is not directly transferred to tryptophan.</text>
</comment>
<organism>
    <name type="scientific">Streptomyces laurentii</name>
    <dbReference type="NCBI Taxonomy" id="39478"/>
    <lineage>
        <taxon>Bacteria</taxon>
        <taxon>Bacillati</taxon>
        <taxon>Actinomycetota</taxon>
        <taxon>Actinomycetes</taxon>
        <taxon>Kitasatosporales</taxon>
        <taxon>Streptomycetaceae</taxon>
        <taxon>Streptomyces</taxon>
    </lineage>
</organism>
<keyword id="KW-0004">4Fe-4S</keyword>
<keyword id="KW-0045">Antibiotic biosynthesis</keyword>
<keyword id="KW-0846">Cobalamin</keyword>
<keyword id="KW-0170">Cobalt</keyword>
<keyword id="KW-0408">Iron</keyword>
<keyword id="KW-0411">Iron-sulfur</keyword>
<keyword id="KW-0479">Metal-binding</keyword>
<keyword id="KW-0949">S-adenosyl-L-methionine</keyword>
<keyword id="KW-0808">Transferase</keyword>
<feature type="chain" id="PRO_0000435308" description="Tryptophan 2-C-methyltransferase">
    <location>
        <begin position="1"/>
        <end position="599"/>
    </location>
</feature>
<feature type="domain" description="B12-binding" evidence="1">
    <location>
        <begin position="4"/>
        <end position="149"/>
    </location>
</feature>
<feature type="domain" description="Radical SAM core" evidence="2">
    <location>
        <begin position="239"/>
        <end position="492"/>
    </location>
</feature>
<feature type="region of interest" description="Disordered" evidence="3">
    <location>
        <begin position="167"/>
        <end position="197"/>
    </location>
</feature>
<feature type="compositionally biased region" description="Low complexity" evidence="3">
    <location>
        <begin position="168"/>
        <end position="181"/>
    </location>
</feature>
<feature type="binding site" evidence="6">
    <location>
        <position position="253"/>
    </location>
    <ligand>
        <name>[4Fe-4S] cluster</name>
        <dbReference type="ChEBI" id="CHEBI:49883"/>
        <note>4Fe-4S-S-AdoMet</note>
    </ligand>
</feature>
<feature type="binding site" evidence="6">
    <location>
        <position position="257"/>
    </location>
    <ligand>
        <name>[4Fe-4S] cluster</name>
        <dbReference type="ChEBI" id="CHEBI:49883"/>
        <note>4Fe-4S-S-AdoMet</note>
    </ligand>
</feature>
<feature type="binding site" evidence="6">
    <location>
        <position position="260"/>
    </location>
    <ligand>
        <name>[4Fe-4S] cluster</name>
        <dbReference type="ChEBI" id="CHEBI:49883"/>
        <note>4Fe-4S-S-AdoMet</note>
    </ligand>
</feature>
<feature type="mutagenesis site" description="Loss of methyltransferase activity." evidence="6">
    <original>C</original>
    <variation>A</variation>
    <location>
        <position position="253"/>
    </location>
</feature>
<feature type="mutagenesis site" description="Loss of methyltransferase activity." evidence="6">
    <original>C</original>
    <variation>A</variation>
    <location>
        <position position="257"/>
    </location>
</feature>
<feature type="mutagenesis site" description="Loss of methyltransferase activity." evidence="6">
    <original>C</original>
    <variation>A</variation>
    <location>
        <position position="260"/>
    </location>
</feature>
<reference key="1">
    <citation type="journal article" date="2009" name="Chem. Biol.">
        <title>Thiopeptide biosynthesis featuring ribosomally synthesized precursor peptides and conserved posttranslational modifications.</title>
        <authorList>
            <person name="Liao R."/>
            <person name="Duan L."/>
            <person name="Lei C."/>
            <person name="Pan H."/>
            <person name="Ding Y."/>
            <person name="Zhang Q."/>
            <person name="Chen D."/>
            <person name="Shen B."/>
            <person name="Yu Y."/>
            <person name="Liu W."/>
        </authorList>
    </citation>
    <scope>NUCLEOTIDE SEQUENCE [GENOMIC DNA]</scope>
    <scope>FUNCTION</scope>
    <source>
        <strain>ATCC 31255</strain>
    </source>
</reference>
<reference key="2">
    <citation type="journal article" date="2009" name="J. Am. Chem. Soc.">
        <title>Thiostrepton biosynthesis: prototype for a new family of bacteriocins.</title>
        <authorList>
            <person name="Kelly W.L."/>
            <person name="Pan L."/>
            <person name="Li C."/>
        </authorList>
    </citation>
    <scope>NUCLEOTIDE SEQUENCE [GENOMIC DNA]</scope>
    <scope>FUNCTION</scope>
    <source>
        <strain>ATCC 31255</strain>
    </source>
</reference>
<reference key="3">
    <citation type="journal article" date="2012" name="Nat. Chem. Biol.">
        <title>Thiostrepton tryptophan methyltransferase expands the chemistry of radical SAM enzymes.</title>
        <authorList>
            <person name="Pierre S."/>
            <person name="Guillot A."/>
            <person name="Benjdia A."/>
            <person name="Sandstroem C."/>
            <person name="Langella P."/>
            <person name="Berteau O."/>
        </authorList>
    </citation>
    <scope>FUNCTION</scope>
    <scope>CATALYTIC ACTIVITY</scope>
    <scope>MUTAGENESIS OF CYS-253; CYS-257 AND CYS-260</scope>
    <scope>COFACTOR</scope>
    <scope>REACTION MECHANISM</scope>
</reference>
<evidence type="ECO:0000255" key="1">
    <source>
        <dbReference type="PROSITE-ProRule" id="PRU00666"/>
    </source>
</evidence>
<evidence type="ECO:0000255" key="2">
    <source>
        <dbReference type="PROSITE-ProRule" id="PRU01266"/>
    </source>
</evidence>
<evidence type="ECO:0000256" key="3">
    <source>
        <dbReference type="SAM" id="MobiDB-lite"/>
    </source>
</evidence>
<evidence type="ECO:0000269" key="4">
    <source>
    </source>
</evidence>
<evidence type="ECO:0000269" key="5">
    <source>
    </source>
</evidence>
<evidence type="ECO:0000269" key="6">
    <source>
    </source>
</evidence>
<evidence type="ECO:0000303" key="7">
    <source>
    </source>
</evidence>
<evidence type="ECO:0000305" key="8"/>
<dbReference type="EC" id="2.1.1.106" evidence="6"/>
<dbReference type="EMBL" id="FJ652572">
    <property type="protein sequence ID" value="ACN52303.1"/>
    <property type="molecule type" value="Genomic_DNA"/>
</dbReference>
<dbReference type="EMBL" id="FJ436358">
    <property type="protein sequence ID" value="ACN80682.1"/>
    <property type="molecule type" value="Genomic_DNA"/>
</dbReference>
<dbReference type="SMR" id="C0JRZ9"/>
<dbReference type="KEGG" id="ag:ACN52303"/>
<dbReference type="BioCyc" id="MetaCyc:MONOMER-19353"/>
<dbReference type="BRENDA" id="2.1.1.106">
    <property type="organism ID" value="6048"/>
</dbReference>
<dbReference type="GO" id="GO:0005829">
    <property type="term" value="C:cytosol"/>
    <property type="evidence" value="ECO:0007669"/>
    <property type="project" value="TreeGrafter"/>
</dbReference>
<dbReference type="GO" id="GO:0051539">
    <property type="term" value="F:4 iron, 4 sulfur cluster binding"/>
    <property type="evidence" value="ECO:0007669"/>
    <property type="project" value="UniProtKB-KW"/>
</dbReference>
<dbReference type="GO" id="GO:0031419">
    <property type="term" value="F:cobalamin binding"/>
    <property type="evidence" value="ECO:0007669"/>
    <property type="project" value="UniProtKB-KW"/>
</dbReference>
<dbReference type="GO" id="GO:0046872">
    <property type="term" value="F:metal ion binding"/>
    <property type="evidence" value="ECO:0007669"/>
    <property type="project" value="UniProtKB-KW"/>
</dbReference>
<dbReference type="GO" id="GO:0030772">
    <property type="term" value="F:tryptophan 2-C-methyltransferase activity"/>
    <property type="evidence" value="ECO:0007669"/>
    <property type="project" value="UniProtKB-EC"/>
</dbReference>
<dbReference type="GO" id="GO:0017000">
    <property type="term" value="P:antibiotic biosynthetic process"/>
    <property type="evidence" value="ECO:0007669"/>
    <property type="project" value="UniProtKB-KW"/>
</dbReference>
<dbReference type="Gene3D" id="3.40.50.280">
    <property type="entry name" value="Cobalamin-binding domain"/>
    <property type="match status" value="1"/>
</dbReference>
<dbReference type="Gene3D" id="3.80.30.20">
    <property type="entry name" value="tm_1862 like domain"/>
    <property type="match status" value="1"/>
</dbReference>
<dbReference type="InterPro" id="IPR030969">
    <property type="entry name" value="B12_rSAM_trp_MT"/>
</dbReference>
<dbReference type="InterPro" id="IPR006158">
    <property type="entry name" value="Cobalamin-bd"/>
</dbReference>
<dbReference type="InterPro" id="IPR006638">
    <property type="entry name" value="Elp3/MiaA/NifB-like_rSAM"/>
</dbReference>
<dbReference type="InterPro" id="IPR007197">
    <property type="entry name" value="rSAM"/>
</dbReference>
<dbReference type="InterPro" id="IPR023404">
    <property type="entry name" value="rSAM_horseshoe"/>
</dbReference>
<dbReference type="InterPro" id="IPR051198">
    <property type="entry name" value="Tetrapyrrole_Bchl_Biosynth_MTs"/>
</dbReference>
<dbReference type="NCBIfam" id="TIGR04428">
    <property type="entry name" value="B12_rSAM_trp_MT"/>
    <property type="match status" value="1"/>
</dbReference>
<dbReference type="PANTHER" id="PTHR43409">
    <property type="entry name" value="ANAEROBIC MAGNESIUM-PROTOPORPHYRIN IX MONOMETHYL ESTER CYCLASE-RELATED"/>
    <property type="match status" value="1"/>
</dbReference>
<dbReference type="PANTHER" id="PTHR43409:SF16">
    <property type="entry name" value="SLR0320 PROTEIN"/>
    <property type="match status" value="1"/>
</dbReference>
<dbReference type="Pfam" id="PF02310">
    <property type="entry name" value="B12-binding"/>
    <property type="match status" value="1"/>
</dbReference>
<dbReference type="Pfam" id="PF04055">
    <property type="entry name" value="Radical_SAM"/>
    <property type="match status" value="1"/>
</dbReference>
<dbReference type="SFLD" id="SFLDG01082">
    <property type="entry name" value="B12-binding_domain_containing"/>
    <property type="match status" value="1"/>
</dbReference>
<dbReference type="SFLD" id="SFLDF00322">
    <property type="entry name" value="tryptophan_2-C-methyltransfera"/>
    <property type="match status" value="1"/>
</dbReference>
<dbReference type="SMART" id="SM00729">
    <property type="entry name" value="Elp3"/>
    <property type="match status" value="1"/>
</dbReference>
<dbReference type="SUPFAM" id="SSF102114">
    <property type="entry name" value="Radical SAM enzymes"/>
    <property type="match status" value="1"/>
</dbReference>
<dbReference type="PROSITE" id="PS51332">
    <property type="entry name" value="B12_BINDING"/>
    <property type="match status" value="1"/>
</dbReference>
<dbReference type="PROSITE" id="PS51918">
    <property type="entry name" value="RADICAL_SAM"/>
    <property type="match status" value="1"/>
</dbReference>
<proteinExistence type="evidence at protein level"/>